<accession>B2V2T4</accession>
<sequence length="405" mass="44798">MDFRTYLKRYPDKNGRFGQYGGAYLTNELIPAFEEIADAYQTICHSSQFISELRRIRKEFQGRPTPVYHCERLSRAIGNCQIYLKREDLNHTGAHKLNHCMGEGLLAKFMGKKRLIAETGAGQHGVALATAAAFFGLECEIHMGEVDIAKQAPNVTRMKILGAKVVPVTHGLKTLKEAVDSAFDSYAKNYKDSIYCIGSALGPHPFPLMVRDFQAVVGYEAKDQFKEMTGFLPDVVTACVGGGSNAAGMFIPFLEEPVDIIGIEPLGRGEKLGDHAASMKYGEKGVMHGFESIMLKDKNGNPAPVYSIASGLDYPSVGPEHAFLRELGRVDYKVINDEEAMEAFFKLSRYEGIIPAIESSHAVAYAMKKAKEMKQGSILVCLSGRGDKDIDYVVEHYGYGEQYFK</sequence>
<comment type="function">
    <text evidence="1">The beta subunit is responsible for the synthesis of L-tryptophan from indole and L-serine.</text>
</comment>
<comment type="catalytic activity">
    <reaction evidence="1">
        <text>(1S,2R)-1-C-(indol-3-yl)glycerol 3-phosphate + L-serine = D-glyceraldehyde 3-phosphate + L-tryptophan + H2O</text>
        <dbReference type="Rhea" id="RHEA:10532"/>
        <dbReference type="ChEBI" id="CHEBI:15377"/>
        <dbReference type="ChEBI" id="CHEBI:33384"/>
        <dbReference type="ChEBI" id="CHEBI:57912"/>
        <dbReference type="ChEBI" id="CHEBI:58866"/>
        <dbReference type="ChEBI" id="CHEBI:59776"/>
        <dbReference type="EC" id="4.2.1.20"/>
    </reaction>
</comment>
<comment type="cofactor">
    <cofactor evidence="1">
        <name>pyridoxal 5'-phosphate</name>
        <dbReference type="ChEBI" id="CHEBI:597326"/>
    </cofactor>
</comment>
<comment type="pathway">
    <text evidence="1">Amino-acid biosynthesis; L-tryptophan biosynthesis; L-tryptophan from chorismate: step 5/5.</text>
</comment>
<comment type="subunit">
    <text evidence="1">Tetramer of two alpha and two beta chains.</text>
</comment>
<comment type="similarity">
    <text evidence="1">Belongs to the TrpB family.</text>
</comment>
<dbReference type="EC" id="4.2.1.20" evidence="1"/>
<dbReference type="EMBL" id="CP001078">
    <property type="protein sequence ID" value="ACD54084.1"/>
    <property type="molecule type" value="Genomic_DNA"/>
</dbReference>
<dbReference type="RefSeq" id="WP_012451847.1">
    <property type="nucleotide sequence ID" value="NC_010723.1"/>
</dbReference>
<dbReference type="SMR" id="B2V2T4"/>
<dbReference type="KEGG" id="cbt:CLH_1805"/>
<dbReference type="HOGENOM" id="CLU_016734_3_1_9"/>
<dbReference type="UniPathway" id="UPA00035">
    <property type="reaction ID" value="UER00044"/>
</dbReference>
<dbReference type="GO" id="GO:0005737">
    <property type="term" value="C:cytoplasm"/>
    <property type="evidence" value="ECO:0007669"/>
    <property type="project" value="TreeGrafter"/>
</dbReference>
<dbReference type="GO" id="GO:0004834">
    <property type="term" value="F:tryptophan synthase activity"/>
    <property type="evidence" value="ECO:0007669"/>
    <property type="project" value="UniProtKB-UniRule"/>
</dbReference>
<dbReference type="CDD" id="cd06446">
    <property type="entry name" value="Trp-synth_B"/>
    <property type="match status" value="1"/>
</dbReference>
<dbReference type="FunFam" id="3.40.50.1100:FF:000004">
    <property type="entry name" value="Tryptophan synthase beta chain"/>
    <property type="match status" value="1"/>
</dbReference>
<dbReference type="Gene3D" id="3.40.50.1100">
    <property type="match status" value="2"/>
</dbReference>
<dbReference type="HAMAP" id="MF_00133">
    <property type="entry name" value="Trp_synth_beta"/>
    <property type="match status" value="1"/>
</dbReference>
<dbReference type="InterPro" id="IPR006653">
    <property type="entry name" value="Trp_synth_b_CS"/>
</dbReference>
<dbReference type="InterPro" id="IPR006654">
    <property type="entry name" value="Trp_synth_beta"/>
</dbReference>
<dbReference type="InterPro" id="IPR023026">
    <property type="entry name" value="Trp_synth_beta/beta-like"/>
</dbReference>
<dbReference type="InterPro" id="IPR001926">
    <property type="entry name" value="TrpB-like_PALP"/>
</dbReference>
<dbReference type="InterPro" id="IPR036052">
    <property type="entry name" value="TrpB-like_PALP_sf"/>
</dbReference>
<dbReference type="NCBIfam" id="TIGR00263">
    <property type="entry name" value="trpB"/>
    <property type="match status" value="1"/>
</dbReference>
<dbReference type="PANTHER" id="PTHR48077:SF3">
    <property type="entry name" value="TRYPTOPHAN SYNTHASE"/>
    <property type="match status" value="1"/>
</dbReference>
<dbReference type="PANTHER" id="PTHR48077">
    <property type="entry name" value="TRYPTOPHAN SYNTHASE-RELATED"/>
    <property type="match status" value="1"/>
</dbReference>
<dbReference type="Pfam" id="PF00291">
    <property type="entry name" value="PALP"/>
    <property type="match status" value="1"/>
</dbReference>
<dbReference type="PIRSF" id="PIRSF001413">
    <property type="entry name" value="Trp_syn_beta"/>
    <property type="match status" value="1"/>
</dbReference>
<dbReference type="SUPFAM" id="SSF53686">
    <property type="entry name" value="Tryptophan synthase beta subunit-like PLP-dependent enzymes"/>
    <property type="match status" value="1"/>
</dbReference>
<dbReference type="PROSITE" id="PS00168">
    <property type="entry name" value="TRP_SYNTHASE_BETA"/>
    <property type="match status" value="1"/>
</dbReference>
<feature type="chain" id="PRO_1000095782" description="Tryptophan synthase beta chain">
    <location>
        <begin position="1"/>
        <end position="405"/>
    </location>
</feature>
<feature type="modified residue" description="N6-(pyridoxal phosphate)lysine" evidence="1">
    <location>
        <position position="96"/>
    </location>
</feature>
<gene>
    <name evidence="1" type="primary">trpB</name>
    <name type="ordered locus">CLH_1805</name>
</gene>
<protein>
    <recommendedName>
        <fullName evidence="1">Tryptophan synthase beta chain</fullName>
        <ecNumber evidence="1">4.2.1.20</ecNumber>
    </recommendedName>
</protein>
<keyword id="KW-0028">Amino-acid biosynthesis</keyword>
<keyword id="KW-0057">Aromatic amino acid biosynthesis</keyword>
<keyword id="KW-0456">Lyase</keyword>
<keyword id="KW-0663">Pyridoxal phosphate</keyword>
<keyword id="KW-0822">Tryptophan biosynthesis</keyword>
<organism>
    <name type="scientific">Clostridium botulinum (strain Alaska E43 / Type E3)</name>
    <dbReference type="NCBI Taxonomy" id="508767"/>
    <lineage>
        <taxon>Bacteria</taxon>
        <taxon>Bacillati</taxon>
        <taxon>Bacillota</taxon>
        <taxon>Clostridia</taxon>
        <taxon>Eubacteriales</taxon>
        <taxon>Clostridiaceae</taxon>
        <taxon>Clostridium</taxon>
    </lineage>
</organism>
<proteinExistence type="inferred from homology"/>
<reference key="1">
    <citation type="submission" date="2008-05" db="EMBL/GenBank/DDBJ databases">
        <title>Complete genome sequence of Clostridium botulinum E3 str. Alaska E43.</title>
        <authorList>
            <person name="Brinkac L.M."/>
            <person name="Brown J.L."/>
            <person name="Bruce D."/>
            <person name="Detter C."/>
            <person name="Munk C."/>
            <person name="Smith L.A."/>
            <person name="Smith T.J."/>
            <person name="Sutton G."/>
            <person name="Brettin T.S."/>
        </authorList>
    </citation>
    <scope>NUCLEOTIDE SEQUENCE [LARGE SCALE GENOMIC DNA]</scope>
    <source>
        <strain>Alaska E43 / Type E3</strain>
    </source>
</reference>
<name>TRPB_CLOBA</name>
<evidence type="ECO:0000255" key="1">
    <source>
        <dbReference type="HAMAP-Rule" id="MF_00133"/>
    </source>
</evidence>